<evidence type="ECO:0000255" key="1">
    <source>
        <dbReference type="HAMAP-Rule" id="MF_00160"/>
    </source>
</evidence>
<dbReference type="EC" id="2.6.1.52" evidence="1"/>
<dbReference type="EMBL" id="AE002098">
    <property type="protein sequence ID" value="AAF41989.1"/>
    <property type="molecule type" value="Genomic_DNA"/>
</dbReference>
<dbReference type="PIR" id="H81059">
    <property type="entry name" value="H81059"/>
</dbReference>
<dbReference type="RefSeq" id="NP_274645.1">
    <property type="nucleotide sequence ID" value="NC_003112.2"/>
</dbReference>
<dbReference type="RefSeq" id="WP_002244251.1">
    <property type="nucleotide sequence ID" value="NC_003112.2"/>
</dbReference>
<dbReference type="SMR" id="P57007"/>
<dbReference type="FunCoup" id="P57007">
    <property type="interactions" value="437"/>
</dbReference>
<dbReference type="STRING" id="122586.NMB1640"/>
<dbReference type="PaxDb" id="122586-NMB1640"/>
<dbReference type="KEGG" id="nme:NMB1640"/>
<dbReference type="PATRIC" id="fig|122586.8.peg.2111"/>
<dbReference type="HOGENOM" id="CLU_034866_0_2_4"/>
<dbReference type="InParanoid" id="P57007"/>
<dbReference type="OrthoDB" id="9809412at2"/>
<dbReference type="UniPathway" id="UPA00135">
    <property type="reaction ID" value="UER00197"/>
</dbReference>
<dbReference type="UniPathway" id="UPA00244">
    <property type="reaction ID" value="UER00311"/>
</dbReference>
<dbReference type="Proteomes" id="UP000000425">
    <property type="component" value="Chromosome"/>
</dbReference>
<dbReference type="GO" id="GO:0005737">
    <property type="term" value="C:cytoplasm"/>
    <property type="evidence" value="ECO:0000318"/>
    <property type="project" value="GO_Central"/>
</dbReference>
<dbReference type="GO" id="GO:0004648">
    <property type="term" value="F:O-phospho-L-serine:2-oxoglutarate aminotransferase activity"/>
    <property type="evidence" value="ECO:0000318"/>
    <property type="project" value="GO_Central"/>
</dbReference>
<dbReference type="GO" id="GO:0030170">
    <property type="term" value="F:pyridoxal phosphate binding"/>
    <property type="evidence" value="ECO:0000318"/>
    <property type="project" value="GO_Central"/>
</dbReference>
<dbReference type="GO" id="GO:0006564">
    <property type="term" value="P:L-serine biosynthetic process"/>
    <property type="evidence" value="ECO:0000318"/>
    <property type="project" value="GO_Central"/>
</dbReference>
<dbReference type="GO" id="GO:0008615">
    <property type="term" value="P:pyridoxine biosynthetic process"/>
    <property type="evidence" value="ECO:0007669"/>
    <property type="project" value="UniProtKB-UniRule"/>
</dbReference>
<dbReference type="CDD" id="cd00611">
    <property type="entry name" value="PSAT_like"/>
    <property type="match status" value="1"/>
</dbReference>
<dbReference type="FunFam" id="3.40.640.10:FF:000010">
    <property type="entry name" value="Phosphoserine aminotransferase"/>
    <property type="match status" value="1"/>
</dbReference>
<dbReference type="FunFam" id="3.90.1150.10:FF:000006">
    <property type="entry name" value="Phosphoserine aminotransferase"/>
    <property type="match status" value="1"/>
</dbReference>
<dbReference type="Gene3D" id="3.90.1150.10">
    <property type="entry name" value="Aspartate Aminotransferase, domain 1"/>
    <property type="match status" value="1"/>
</dbReference>
<dbReference type="Gene3D" id="3.40.640.10">
    <property type="entry name" value="Type I PLP-dependent aspartate aminotransferase-like (Major domain)"/>
    <property type="match status" value="1"/>
</dbReference>
<dbReference type="HAMAP" id="MF_00160">
    <property type="entry name" value="SerC_aminotrans_5"/>
    <property type="match status" value="1"/>
</dbReference>
<dbReference type="InterPro" id="IPR000192">
    <property type="entry name" value="Aminotrans_V_dom"/>
</dbReference>
<dbReference type="InterPro" id="IPR020578">
    <property type="entry name" value="Aminotrans_V_PyrdxlP_BS"/>
</dbReference>
<dbReference type="InterPro" id="IPR022278">
    <property type="entry name" value="Pser_aminoTfrase"/>
</dbReference>
<dbReference type="InterPro" id="IPR015424">
    <property type="entry name" value="PyrdxlP-dep_Trfase"/>
</dbReference>
<dbReference type="InterPro" id="IPR015421">
    <property type="entry name" value="PyrdxlP-dep_Trfase_major"/>
</dbReference>
<dbReference type="InterPro" id="IPR015422">
    <property type="entry name" value="PyrdxlP-dep_Trfase_small"/>
</dbReference>
<dbReference type="NCBIfam" id="NF003764">
    <property type="entry name" value="PRK05355.1"/>
    <property type="match status" value="1"/>
</dbReference>
<dbReference type="NCBIfam" id="TIGR01364">
    <property type="entry name" value="serC_1"/>
    <property type="match status" value="1"/>
</dbReference>
<dbReference type="PANTHER" id="PTHR43247">
    <property type="entry name" value="PHOSPHOSERINE AMINOTRANSFERASE"/>
    <property type="match status" value="1"/>
</dbReference>
<dbReference type="PANTHER" id="PTHR43247:SF1">
    <property type="entry name" value="PHOSPHOSERINE AMINOTRANSFERASE"/>
    <property type="match status" value="1"/>
</dbReference>
<dbReference type="Pfam" id="PF00266">
    <property type="entry name" value="Aminotran_5"/>
    <property type="match status" value="1"/>
</dbReference>
<dbReference type="PIRSF" id="PIRSF000525">
    <property type="entry name" value="SerC"/>
    <property type="match status" value="1"/>
</dbReference>
<dbReference type="SUPFAM" id="SSF53383">
    <property type="entry name" value="PLP-dependent transferases"/>
    <property type="match status" value="1"/>
</dbReference>
<dbReference type="PROSITE" id="PS00595">
    <property type="entry name" value="AA_TRANSFER_CLASS_5"/>
    <property type="match status" value="1"/>
</dbReference>
<proteinExistence type="inferred from homology"/>
<feature type="chain" id="PRO_0000150192" description="Phosphoserine aminotransferase">
    <location>
        <begin position="1"/>
        <end position="368"/>
    </location>
</feature>
<feature type="binding site" evidence="1">
    <location>
        <position position="44"/>
    </location>
    <ligand>
        <name>L-glutamate</name>
        <dbReference type="ChEBI" id="CHEBI:29985"/>
    </ligand>
</feature>
<feature type="binding site" evidence="1">
    <location>
        <begin position="78"/>
        <end position="79"/>
    </location>
    <ligand>
        <name>pyridoxal 5'-phosphate</name>
        <dbReference type="ChEBI" id="CHEBI:597326"/>
    </ligand>
</feature>
<feature type="binding site" evidence="1">
    <location>
        <position position="104"/>
    </location>
    <ligand>
        <name>pyridoxal 5'-phosphate</name>
        <dbReference type="ChEBI" id="CHEBI:597326"/>
    </ligand>
</feature>
<feature type="binding site" evidence="1">
    <location>
        <position position="157"/>
    </location>
    <ligand>
        <name>pyridoxal 5'-phosphate</name>
        <dbReference type="ChEBI" id="CHEBI:597326"/>
    </ligand>
</feature>
<feature type="binding site" evidence="1">
    <location>
        <position position="179"/>
    </location>
    <ligand>
        <name>pyridoxal 5'-phosphate</name>
        <dbReference type="ChEBI" id="CHEBI:597326"/>
    </ligand>
</feature>
<feature type="binding site" evidence="1">
    <location>
        <position position="202"/>
    </location>
    <ligand>
        <name>pyridoxal 5'-phosphate</name>
        <dbReference type="ChEBI" id="CHEBI:597326"/>
    </ligand>
</feature>
<feature type="binding site" evidence="1">
    <location>
        <begin position="244"/>
        <end position="245"/>
    </location>
    <ligand>
        <name>pyridoxal 5'-phosphate</name>
        <dbReference type="ChEBI" id="CHEBI:597326"/>
    </ligand>
</feature>
<feature type="modified residue" description="N6-(pyridoxal phosphate)lysine" evidence="1">
    <location>
        <position position="203"/>
    </location>
</feature>
<comment type="function">
    <text evidence="1">Catalyzes the reversible conversion of 3-phosphohydroxypyruvate to phosphoserine and of 3-hydroxy-2-oxo-4-phosphonooxybutanoate to phosphohydroxythreonine.</text>
</comment>
<comment type="catalytic activity">
    <reaction evidence="1">
        <text>O-phospho-L-serine + 2-oxoglutarate = 3-phosphooxypyruvate + L-glutamate</text>
        <dbReference type="Rhea" id="RHEA:14329"/>
        <dbReference type="ChEBI" id="CHEBI:16810"/>
        <dbReference type="ChEBI" id="CHEBI:18110"/>
        <dbReference type="ChEBI" id="CHEBI:29985"/>
        <dbReference type="ChEBI" id="CHEBI:57524"/>
        <dbReference type="EC" id="2.6.1.52"/>
    </reaction>
</comment>
<comment type="catalytic activity">
    <reaction evidence="1">
        <text>4-(phosphooxy)-L-threonine + 2-oxoglutarate = (R)-3-hydroxy-2-oxo-4-phosphooxybutanoate + L-glutamate</text>
        <dbReference type="Rhea" id="RHEA:16573"/>
        <dbReference type="ChEBI" id="CHEBI:16810"/>
        <dbReference type="ChEBI" id="CHEBI:29985"/>
        <dbReference type="ChEBI" id="CHEBI:58452"/>
        <dbReference type="ChEBI" id="CHEBI:58538"/>
        <dbReference type="EC" id="2.6.1.52"/>
    </reaction>
</comment>
<comment type="cofactor">
    <cofactor evidence="1">
        <name>pyridoxal 5'-phosphate</name>
        <dbReference type="ChEBI" id="CHEBI:597326"/>
    </cofactor>
    <text evidence="1">Binds 1 pyridoxal phosphate per subunit.</text>
</comment>
<comment type="pathway">
    <text evidence="1">Amino-acid biosynthesis; L-serine biosynthesis; L-serine from 3-phospho-D-glycerate: step 2/3.</text>
</comment>
<comment type="pathway">
    <text evidence="1">Cofactor biosynthesis; pyridoxine 5'-phosphate biosynthesis; pyridoxine 5'-phosphate from D-erythrose 4-phosphate: step 3/5.</text>
</comment>
<comment type="subunit">
    <text evidence="1">Homodimer.</text>
</comment>
<comment type="subcellular location">
    <subcellularLocation>
        <location evidence="1">Cytoplasm</location>
    </subcellularLocation>
</comment>
<comment type="similarity">
    <text evidence="1">Belongs to the class-V pyridoxal-phosphate-dependent aminotransferase family. SerC subfamily.</text>
</comment>
<protein>
    <recommendedName>
        <fullName evidence="1">Phosphoserine aminotransferase</fullName>
        <ecNumber evidence="1">2.6.1.52</ecNumber>
    </recommendedName>
    <alternativeName>
        <fullName evidence="1">Phosphohydroxythreonine aminotransferase</fullName>
        <shortName evidence="1">PSAT</shortName>
    </alternativeName>
</protein>
<keyword id="KW-0028">Amino-acid biosynthesis</keyword>
<keyword id="KW-0032">Aminotransferase</keyword>
<keyword id="KW-0963">Cytoplasm</keyword>
<keyword id="KW-0663">Pyridoxal phosphate</keyword>
<keyword id="KW-0664">Pyridoxine biosynthesis</keyword>
<keyword id="KW-1185">Reference proteome</keyword>
<keyword id="KW-0718">Serine biosynthesis</keyword>
<keyword id="KW-0808">Transferase</keyword>
<name>SERC_NEIMB</name>
<accession>P57007</accession>
<reference key="1">
    <citation type="journal article" date="2000" name="Science">
        <title>Complete genome sequence of Neisseria meningitidis serogroup B strain MC58.</title>
        <authorList>
            <person name="Tettelin H."/>
            <person name="Saunders N.J."/>
            <person name="Heidelberg J.F."/>
            <person name="Jeffries A.C."/>
            <person name="Nelson K.E."/>
            <person name="Eisen J.A."/>
            <person name="Ketchum K.A."/>
            <person name="Hood D.W."/>
            <person name="Peden J.F."/>
            <person name="Dodson R.J."/>
            <person name="Nelson W.C."/>
            <person name="Gwinn M.L."/>
            <person name="DeBoy R.T."/>
            <person name="Peterson J.D."/>
            <person name="Hickey E.K."/>
            <person name="Haft D.H."/>
            <person name="Salzberg S.L."/>
            <person name="White O."/>
            <person name="Fleischmann R.D."/>
            <person name="Dougherty B.A."/>
            <person name="Mason T.M."/>
            <person name="Ciecko A."/>
            <person name="Parksey D.S."/>
            <person name="Blair E."/>
            <person name="Cittone H."/>
            <person name="Clark E.B."/>
            <person name="Cotton M.D."/>
            <person name="Utterback T.R."/>
            <person name="Khouri H.M."/>
            <person name="Qin H."/>
            <person name="Vamathevan J.J."/>
            <person name="Gill J."/>
            <person name="Scarlato V."/>
            <person name="Masignani V."/>
            <person name="Pizza M."/>
            <person name="Grandi G."/>
            <person name="Sun L."/>
            <person name="Smith H.O."/>
            <person name="Fraser C.M."/>
            <person name="Moxon E.R."/>
            <person name="Rappuoli R."/>
            <person name="Venter J.C."/>
        </authorList>
    </citation>
    <scope>NUCLEOTIDE SEQUENCE [LARGE SCALE GENOMIC DNA]</scope>
    <source>
        <strain>ATCC BAA-335 / MC58</strain>
    </source>
</reference>
<sequence>MSLYPIYNFSAGPAVLPEAVLETARQEMLDYNGTGFPVMAMSHRSEMFLSILHHAEQDLRQLLKVPDNYKILFLQGGATTQFNMAAMNLAHGFRTADAVVTGNWSRIAYEQMSRLTDTEIRLAAHGGEQFDYLDLPPVETWDVAPDSAFVHFAVNETVNGLQYREVPCLSEGMPPLVCDMSSEILSREFDVADYGLIYAGAQKNIGPAGVTVVIVREDLLERCPNDIPDVFNYRSHINRDGMYNTPSTYAIYMSGLVFRWLQAQGGVKKIEAVNRLKAQTLYETIDGSDGFYINRIRPNARSKMNVVFQTGDEELDRRFVLEAELQGLCLLKGYKTVGGMRASIYNAMPLEGVRALADFMRDFQRRYG</sequence>
<gene>
    <name evidence="1" type="primary">serC</name>
    <name type="ordered locus">NMB1640</name>
</gene>
<organism>
    <name type="scientific">Neisseria meningitidis serogroup B (strain ATCC BAA-335 / MC58)</name>
    <dbReference type="NCBI Taxonomy" id="122586"/>
    <lineage>
        <taxon>Bacteria</taxon>
        <taxon>Pseudomonadati</taxon>
        <taxon>Pseudomonadota</taxon>
        <taxon>Betaproteobacteria</taxon>
        <taxon>Neisseriales</taxon>
        <taxon>Neisseriaceae</taxon>
        <taxon>Neisseria</taxon>
    </lineage>
</organism>